<keyword id="KW-0438">Lignin biosynthesis</keyword>
<keyword id="KW-0479">Metal-binding</keyword>
<keyword id="KW-0521">NADP</keyword>
<keyword id="KW-0560">Oxidoreductase</keyword>
<keyword id="KW-1185">Reference proteome</keyword>
<keyword id="KW-0862">Zinc</keyword>
<feature type="chain" id="PRO_0000457414" description="Cinnamyl alcohol dehydrogenase 1">
    <location>
        <begin position="1"/>
        <end position="358"/>
    </location>
</feature>
<feature type="domain" description="Enoyl reductase (ER)" evidence="3">
    <location>
        <begin position="21"/>
        <end position="349"/>
    </location>
</feature>
<feature type="binding site" evidence="1">
    <location>
        <position position="48"/>
    </location>
    <ligand>
        <name>Zn(2+)</name>
        <dbReference type="ChEBI" id="CHEBI:29105"/>
        <label>1</label>
        <note>catalytic</note>
    </ligand>
</feature>
<feature type="binding site" evidence="1">
    <location>
        <position position="50"/>
    </location>
    <ligand>
        <name>NADP(+)</name>
        <dbReference type="ChEBI" id="CHEBI:58349"/>
    </ligand>
</feature>
<feature type="binding site" evidence="1">
    <location>
        <position position="70"/>
    </location>
    <ligand>
        <name>Zn(2+)</name>
        <dbReference type="ChEBI" id="CHEBI:29105"/>
        <label>1</label>
        <note>catalytic</note>
    </ligand>
</feature>
<feature type="binding site" evidence="1">
    <location>
        <position position="71"/>
    </location>
    <ligand>
        <name>Zn(2+)</name>
        <dbReference type="ChEBI" id="CHEBI:29105"/>
        <label>1</label>
        <note>catalytic</note>
    </ligand>
</feature>
<feature type="binding site" evidence="1">
    <location>
        <position position="101"/>
    </location>
    <ligand>
        <name>Zn(2+)</name>
        <dbReference type="ChEBI" id="CHEBI:29105"/>
        <label>2</label>
    </ligand>
</feature>
<feature type="binding site" evidence="1">
    <location>
        <position position="104"/>
    </location>
    <ligand>
        <name>Zn(2+)</name>
        <dbReference type="ChEBI" id="CHEBI:29105"/>
        <label>2</label>
    </ligand>
</feature>
<feature type="binding site" evidence="1">
    <location>
        <position position="107"/>
    </location>
    <ligand>
        <name>Zn(2+)</name>
        <dbReference type="ChEBI" id="CHEBI:29105"/>
        <label>2</label>
    </ligand>
</feature>
<feature type="binding site" evidence="1">
    <location>
        <position position="115"/>
    </location>
    <ligand>
        <name>Zn(2+)</name>
        <dbReference type="ChEBI" id="CHEBI:29105"/>
        <label>2</label>
    </ligand>
</feature>
<feature type="binding site" evidence="1">
    <location>
        <position position="164"/>
    </location>
    <ligand>
        <name>Zn(2+)</name>
        <dbReference type="ChEBI" id="CHEBI:29105"/>
        <label>1</label>
        <note>catalytic</note>
    </ligand>
</feature>
<feature type="binding site" evidence="1">
    <location>
        <position position="168"/>
    </location>
    <ligand>
        <name>NADP(+)</name>
        <dbReference type="ChEBI" id="CHEBI:58349"/>
    </ligand>
</feature>
<feature type="binding site" evidence="1">
    <location>
        <begin position="189"/>
        <end position="194"/>
    </location>
    <ligand>
        <name>NADP(+)</name>
        <dbReference type="ChEBI" id="CHEBI:58349"/>
    </ligand>
</feature>
<feature type="binding site" evidence="1">
    <location>
        <begin position="212"/>
        <end position="217"/>
    </location>
    <ligand>
        <name>NADP(+)</name>
        <dbReference type="ChEBI" id="CHEBI:58349"/>
    </ligand>
</feature>
<feature type="binding site" evidence="1">
    <location>
        <position position="252"/>
    </location>
    <ligand>
        <name>NADP(+)</name>
        <dbReference type="ChEBI" id="CHEBI:58349"/>
    </ligand>
</feature>
<feature type="binding site" evidence="1">
    <location>
        <position position="276"/>
    </location>
    <ligand>
        <name>NADP(+)</name>
        <dbReference type="ChEBI" id="CHEBI:58349"/>
    </ligand>
</feature>
<feature type="binding site" evidence="1">
    <location>
        <begin position="299"/>
        <end position="301"/>
    </location>
    <ligand>
        <name>NADP(+)</name>
        <dbReference type="ChEBI" id="CHEBI:58349"/>
    </ligand>
</feature>
<feature type="sequence conflict" description="In Ref. 5; AFK39519." evidence="6" ref="5">
    <original>N</original>
    <variation>D</variation>
    <location>
        <position position="116"/>
    </location>
</feature>
<feature type="sequence conflict" description="In Ref. 5; AFK40467." evidence="6" ref="5">
    <original>S</original>
    <variation>P</variation>
    <location>
        <position position="213"/>
    </location>
</feature>
<feature type="sequence conflict" description="In Ref. 4; ACJ84419." evidence="6" ref="4">
    <original>D</original>
    <variation>E</variation>
    <location>
        <position position="224"/>
    </location>
</feature>
<proteinExistence type="evidence at protein level"/>
<comment type="function">
    <text evidence="2 4">Involved in lignin biosynthesis. Catalyzes the final step specific for the production of lignin monomers. Catalyzes the NADPH-dependent reduction of coniferaldehyde, 5-hydroxyconiferaldehyde, sinapaldehyde, 4-coumaraldehyde and caffeyl aldehyde to their respective alcohols (By similarity). Can use coumaraldehyde and, with a lower efficiency, coniferaldehyde and sinapaldehyde as substrates (PubMed:25217505).</text>
</comment>
<comment type="catalytic activity">
    <reaction evidence="2">
        <text>(E)-cinnamyl alcohol + NADP(+) = (E)-cinnamaldehyde + NADPH + H(+)</text>
        <dbReference type="Rhea" id="RHEA:10392"/>
        <dbReference type="ChEBI" id="CHEBI:15378"/>
        <dbReference type="ChEBI" id="CHEBI:16731"/>
        <dbReference type="ChEBI" id="CHEBI:33227"/>
        <dbReference type="ChEBI" id="CHEBI:57783"/>
        <dbReference type="ChEBI" id="CHEBI:58349"/>
        <dbReference type="EC" id="1.1.1.195"/>
    </reaction>
    <physiologicalReaction direction="right-to-left" evidence="2">
        <dbReference type="Rhea" id="RHEA:10394"/>
    </physiologicalReaction>
</comment>
<comment type="catalytic activity">
    <reaction evidence="4">
        <text>(E)-coniferol + NADP(+) = (E)-coniferaldehyde + NADPH + H(+)</text>
        <dbReference type="Rhea" id="RHEA:22444"/>
        <dbReference type="ChEBI" id="CHEBI:15378"/>
        <dbReference type="ChEBI" id="CHEBI:16547"/>
        <dbReference type="ChEBI" id="CHEBI:17745"/>
        <dbReference type="ChEBI" id="CHEBI:57783"/>
        <dbReference type="ChEBI" id="CHEBI:58349"/>
        <dbReference type="EC" id="1.1.1.195"/>
    </reaction>
    <physiologicalReaction direction="right-to-left" evidence="4">
        <dbReference type="Rhea" id="RHEA:22446"/>
    </physiologicalReaction>
</comment>
<comment type="catalytic activity">
    <reaction evidence="4">
        <text>(E)-sinapyl alcohol + NADP(+) = (E)-sinapaldehyde + NADPH + H(+)</text>
        <dbReference type="Rhea" id="RHEA:45704"/>
        <dbReference type="ChEBI" id="CHEBI:15378"/>
        <dbReference type="ChEBI" id="CHEBI:27949"/>
        <dbReference type="ChEBI" id="CHEBI:57783"/>
        <dbReference type="ChEBI" id="CHEBI:58349"/>
        <dbReference type="ChEBI" id="CHEBI:64557"/>
        <dbReference type="EC" id="1.1.1.195"/>
    </reaction>
    <physiologicalReaction direction="right-to-left" evidence="4">
        <dbReference type="Rhea" id="RHEA:45706"/>
    </physiologicalReaction>
</comment>
<comment type="catalytic activity">
    <reaction evidence="4">
        <text>(E)-4-coumaroyl alcohol + NADP(+) = (E)-4-coumaraldehyde + NADPH + H(+)</text>
        <dbReference type="Rhea" id="RHEA:45724"/>
        <dbReference type="ChEBI" id="CHEBI:15378"/>
        <dbReference type="ChEBI" id="CHEBI:28353"/>
        <dbReference type="ChEBI" id="CHEBI:57783"/>
        <dbReference type="ChEBI" id="CHEBI:58349"/>
        <dbReference type="ChEBI" id="CHEBI:64555"/>
        <dbReference type="EC" id="1.1.1.195"/>
    </reaction>
    <physiologicalReaction direction="right-to-left" evidence="4">
        <dbReference type="Rhea" id="RHEA:45726"/>
    </physiologicalReaction>
</comment>
<comment type="cofactor">
    <cofactor evidence="1">
        <name>Zn(2+)</name>
        <dbReference type="ChEBI" id="CHEBI:29105"/>
    </cofactor>
    <text evidence="1">Binds 2 Zn(2+) ions per subunit.</text>
</comment>
<comment type="biophysicochemical properties">
    <kinetics>
        <KM evidence="4">8 uM for coumaraldehyde (at pH 6.25 and 30 degrees Celsius)</KM>
        <KM evidence="4">8.5 uM for coniferaldehyde (at pH 6.25 and 30 degrees Celsius)</KM>
        <KM evidence="4">10.9 uM for sinapaldehyde (at pH 6.25 and 30 degrees Celsius)</KM>
        <Vmax evidence="4">402.0 nmol/sec/mg enzyme with coumaraldehyde as substrate (at pH 6.25 and 30 degrees Celsius)</Vmax>
        <Vmax evidence="4">229.0 nmol/sec/mg enzyme with coniferaldehyde as substrate (at pH 6.25 and 30 degrees Celsius)</Vmax>
        <Vmax evidence="4">260.0 nmol/sec/mg enzyme with sinapaldehyde as substrate (at pH 6.25 and 30 degrees Celsius)</Vmax>
        <text evidence="4">kcat is 15.6 sec(-1) with coumaraldehyde as substrate (at pH 6.25 and 30 degrees Celsius) (PubMed:25217505). kcat is 9.1 sec(-1) with coniferaldehyde as substrate (at pH 6.25 and 30 degrees Celsius) (PubMed:25217505). kcat is 10.2 sec(-1) with sinapaldehyde as substrate (at pH 6.25 and 30 degrees Celsius) (PubMed:25217505).</text>
    </kinetics>
</comment>
<comment type="pathway">
    <text evidence="6">Aromatic compound metabolism; phenylpropanoid biosynthesis.</text>
</comment>
<comment type="subunit">
    <text evidence="1">Homodimer.</text>
</comment>
<comment type="similarity">
    <text evidence="6">Belongs to the zinc-containing alcohol dehydrogenase family.</text>
</comment>
<name>CAD1_MEDTR</name>
<protein>
    <recommendedName>
        <fullName evidence="5">Cinnamyl alcohol dehydrogenase 1</fullName>
        <shortName evidence="5">Mt-CAD1</shortName>
        <ecNumber evidence="2">1.1.1.195</ecNumber>
    </recommendedName>
    <alternativeName>
        <fullName evidence="7">Coniferol dehydrogenase</fullName>
    </alternativeName>
    <alternativeName>
        <fullName evidence="7">Coumaroyl alcohol dehydrogenase</fullName>
    </alternativeName>
    <alternativeName>
        <fullName evidence="7">Sinapyl alcohol dehydrogenase</fullName>
    </alternativeName>
</protein>
<dbReference type="EC" id="1.1.1.195" evidence="2"/>
<dbReference type="EMBL" id="CM001217">
    <property type="protein sequence ID" value="KEH44099.1"/>
    <property type="molecule type" value="Genomic_DNA"/>
</dbReference>
<dbReference type="EMBL" id="PSQE01000001">
    <property type="protein sequence ID" value="RHN82261.1"/>
    <property type="molecule type" value="Genomic_DNA"/>
</dbReference>
<dbReference type="EMBL" id="BT051757">
    <property type="protein sequence ID" value="ACJ84419.1"/>
    <property type="molecule type" value="mRNA"/>
</dbReference>
<dbReference type="EMBL" id="BT139724">
    <property type="protein sequence ID" value="AFK39519.1"/>
    <property type="molecule type" value="mRNA"/>
</dbReference>
<dbReference type="EMBL" id="BT140672">
    <property type="protein sequence ID" value="AFK40467.1"/>
    <property type="molecule type" value="mRNA"/>
</dbReference>
<dbReference type="RefSeq" id="XP_013470061.1">
    <property type="nucleotide sequence ID" value="XM_013614607.1"/>
</dbReference>
<dbReference type="SMR" id="A0A072VPZ8"/>
<dbReference type="STRING" id="3880.A0A072VPZ8"/>
<dbReference type="EnsemblPlants" id="rna6409">
    <property type="protein sequence ID" value="RHN82261.1"/>
    <property type="gene ID" value="gene6409"/>
</dbReference>
<dbReference type="GeneID" id="25485411"/>
<dbReference type="Gramene" id="rna6409">
    <property type="protein sequence ID" value="RHN82261.1"/>
    <property type="gene ID" value="gene6409"/>
</dbReference>
<dbReference type="KEGG" id="mtr:25485411"/>
<dbReference type="OrthoDB" id="1879366at2759"/>
<dbReference type="UniPathway" id="UPA00711"/>
<dbReference type="Proteomes" id="UP000002051">
    <property type="component" value="Chromosome 1"/>
</dbReference>
<dbReference type="Proteomes" id="UP000265566">
    <property type="component" value="Chromosome 1"/>
</dbReference>
<dbReference type="ExpressionAtlas" id="A0A072VPZ8">
    <property type="expression patterns" value="differential"/>
</dbReference>
<dbReference type="GO" id="GO:0045551">
    <property type="term" value="F:cinnamyl-alcohol dehydrogenase activity"/>
    <property type="evidence" value="ECO:0000318"/>
    <property type="project" value="GO_Central"/>
</dbReference>
<dbReference type="GO" id="GO:0008270">
    <property type="term" value="F:zinc ion binding"/>
    <property type="evidence" value="ECO:0007669"/>
    <property type="project" value="InterPro"/>
</dbReference>
<dbReference type="GO" id="GO:0009809">
    <property type="term" value="P:lignin biosynthetic process"/>
    <property type="evidence" value="ECO:0000318"/>
    <property type="project" value="GO_Central"/>
</dbReference>
<dbReference type="CDD" id="cd05283">
    <property type="entry name" value="CAD1"/>
    <property type="match status" value="1"/>
</dbReference>
<dbReference type="FunFam" id="3.40.50.720:FF:000022">
    <property type="entry name" value="Cinnamyl alcohol dehydrogenase"/>
    <property type="match status" value="1"/>
</dbReference>
<dbReference type="FunFam" id="3.90.180.10:FF:000004">
    <property type="entry name" value="probable cinnamyl alcohol dehydrogenase"/>
    <property type="match status" value="1"/>
</dbReference>
<dbReference type="FunFam" id="3.90.180.10:FF:000100">
    <property type="entry name" value="Putative cinnamyl alcohol dehydrogenase 6"/>
    <property type="match status" value="1"/>
</dbReference>
<dbReference type="Gene3D" id="3.90.180.10">
    <property type="entry name" value="Medium-chain alcohol dehydrogenases, catalytic domain"/>
    <property type="match status" value="1"/>
</dbReference>
<dbReference type="Gene3D" id="3.40.50.720">
    <property type="entry name" value="NAD(P)-binding Rossmann-like Domain"/>
    <property type="match status" value="1"/>
</dbReference>
<dbReference type="InterPro" id="IPR013149">
    <property type="entry name" value="ADH-like_C"/>
</dbReference>
<dbReference type="InterPro" id="IPR013154">
    <property type="entry name" value="ADH-like_N"/>
</dbReference>
<dbReference type="InterPro" id="IPR002328">
    <property type="entry name" value="ADH_Zn_CS"/>
</dbReference>
<dbReference type="InterPro" id="IPR047109">
    <property type="entry name" value="CAD-like"/>
</dbReference>
<dbReference type="InterPro" id="IPR011032">
    <property type="entry name" value="GroES-like_sf"/>
</dbReference>
<dbReference type="InterPro" id="IPR036291">
    <property type="entry name" value="NAD(P)-bd_dom_sf"/>
</dbReference>
<dbReference type="InterPro" id="IPR020843">
    <property type="entry name" value="PKS_ER"/>
</dbReference>
<dbReference type="PANTHER" id="PTHR42683">
    <property type="entry name" value="ALDEHYDE REDUCTASE"/>
    <property type="match status" value="1"/>
</dbReference>
<dbReference type="Pfam" id="PF08240">
    <property type="entry name" value="ADH_N"/>
    <property type="match status" value="1"/>
</dbReference>
<dbReference type="Pfam" id="PF00107">
    <property type="entry name" value="ADH_zinc_N"/>
    <property type="match status" value="1"/>
</dbReference>
<dbReference type="SMART" id="SM00829">
    <property type="entry name" value="PKS_ER"/>
    <property type="match status" value="1"/>
</dbReference>
<dbReference type="SUPFAM" id="SSF50129">
    <property type="entry name" value="GroES-like"/>
    <property type="match status" value="1"/>
</dbReference>
<dbReference type="SUPFAM" id="SSF51735">
    <property type="entry name" value="NAD(P)-binding Rossmann-fold domains"/>
    <property type="match status" value="1"/>
</dbReference>
<dbReference type="PROSITE" id="PS00059">
    <property type="entry name" value="ADH_ZINC"/>
    <property type="match status" value="1"/>
</dbReference>
<sequence length="358" mass="38955">MGSIEVAERTTVGLAAKDPSGILTPYTYTLRNTGPDDVYIKIHYCGVCHSDLHQIKNDLGMSNYPMVPGHEVVGEVLEVGSNVTRFKVGEIVGVGLLVGCCKSCRACDSEIEQYCNKKIWSYNDVYTDGKITQGGFAESTVVEQKFVVKIPEGLAPEQVAPLLCAGVTVYSPLSHFGLKTPGLRGGILGLGGVGHMGVKVAKAFGHHVTVISSSDKKKKEALEDLGADSYLVSSDTVGMQEAADSLDYIIDTVPVGHPLEPYLSLLKIDGKLILMGVINTPLQFVTPMVMLGRKSITGSFVGSVKETEEMLEFWKEKGLSSMIEIVTMDYINKAFERLEKNDVRYRFVVDVKGSKFED</sequence>
<gene>
    <name evidence="5" type="primary">CAD1</name>
    <name evidence="8" type="ordered locus">MTR_1g107425</name>
    <name evidence="9" type="ORF">MtrunA17_Chr1g0208031</name>
</gene>
<accession>A0A072VPZ8</accession>
<accession>B7FI40</accession>
<accession>I3SGX7</accession>
<accession>I3SJM5</accession>
<reference key="1">
    <citation type="journal article" date="2011" name="Nature">
        <title>The Medicago genome provides insight into the evolution of rhizobial symbioses.</title>
        <authorList>
            <person name="Young N.D."/>
            <person name="Debelle F."/>
            <person name="Oldroyd G.E.D."/>
            <person name="Geurts R."/>
            <person name="Cannon S.B."/>
            <person name="Udvardi M.K."/>
            <person name="Benedito V.A."/>
            <person name="Mayer K.F.X."/>
            <person name="Gouzy J."/>
            <person name="Schoof H."/>
            <person name="Van de Peer Y."/>
            <person name="Proost S."/>
            <person name="Cook D.R."/>
            <person name="Meyers B.C."/>
            <person name="Spannagl M."/>
            <person name="Cheung F."/>
            <person name="De Mita S."/>
            <person name="Krishnakumar V."/>
            <person name="Gundlach H."/>
            <person name="Zhou S."/>
            <person name="Mudge J."/>
            <person name="Bharti A.K."/>
            <person name="Murray J.D."/>
            <person name="Naoumkina M.A."/>
            <person name="Rosen B."/>
            <person name="Silverstein K.A.T."/>
            <person name="Tang H."/>
            <person name="Rombauts S."/>
            <person name="Zhao P.X."/>
            <person name="Zhou P."/>
            <person name="Barbe V."/>
            <person name="Bardou P."/>
            <person name="Bechner M."/>
            <person name="Bellec A."/>
            <person name="Berger A."/>
            <person name="Berges H."/>
            <person name="Bidwell S."/>
            <person name="Bisseling T."/>
            <person name="Choisne N."/>
            <person name="Couloux A."/>
            <person name="Denny R."/>
            <person name="Deshpande S."/>
            <person name="Dai X."/>
            <person name="Doyle J.J."/>
            <person name="Dudez A.-M."/>
            <person name="Farmer A.D."/>
            <person name="Fouteau S."/>
            <person name="Franken C."/>
            <person name="Gibelin C."/>
            <person name="Gish J."/>
            <person name="Goldstein S."/>
            <person name="Gonzalez A.J."/>
            <person name="Green P.J."/>
            <person name="Hallab A."/>
            <person name="Hartog M."/>
            <person name="Hua A."/>
            <person name="Humphray S.J."/>
            <person name="Jeong D.-H."/>
            <person name="Jing Y."/>
            <person name="Jocker A."/>
            <person name="Kenton S.M."/>
            <person name="Kim D.-J."/>
            <person name="Klee K."/>
            <person name="Lai H."/>
            <person name="Lang C."/>
            <person name="Lin S."/>
            <person name="Macmil S.L."/>
            <person name="Magdelenat G."/>
            <person name="Matthews L."/>
            <person name="McCorrison J."/>
            <person name="Monaghan E.L."/>
            <person name="Mun J.-H."/>
            <person name="Najar F.Z."/>
            <person name="Nicholson C."/>
            <person name="Noirot C."/>
            <person name="O'Bleness M."/>
            <person name="Paule C.R."/>
            <person name="Poulain J."/>
            <person name="Prion F."/>
            <person name="Qin B."/>
            <person name="Qu C."/>
            <person name="Retzel E.F."/>
            <person name="Riddle C."/>
            <person name="Sallet E."/>
            <person name="Samain S."/>
            <person name="Samson N."/>
            <person name="Sanders I."/>
            <person name="Saurat O."/>
            <person name="Scarpelli C."/>
            <person name="Schiex T."/>
            <person name="Segurens B."/>
            <person name="Severin A.J."/>
            <person name="Sherrier D.J."/>
            <person name="Shi R."/>
            <person name="Sims S."/>
            <person name="Singer S.R."/>
            <person name="Sinharoy S."/>
            <person name="Sterck L."/>
            <person name="Viollet A."/>
            <person name="Wang B.-B."/>
            <person name="Wang K."/>
            <person name="Wang M."/>
            <person name="Wang X."/>
            <person name="Warfsmann J."/>
            <person name="Weissenbach J."/>
            <person name="White D.D."/>
            <person name="White J.D."/>
            <person name="Wiley G.B."/>
            <person name="Wincker P."/>
            <person name="Xing Y."/>
            <person name="Yang L."/>
            <person name="Yao Z."/>
            <person name="Ying F."/>
            <person name="Zhai J."/>
            <person name="Zhou L."/>
            <person name="Zuber A."/>
            <person name="Denarie J."/>
            <person name="Dixon R.A."/>
            <person name="May G.D."/>
            <person name="Schwartz D.C."/>
            <person name="Rogers J."/>
            <person name="Quetier F."/>
            <person name="Town C.D."/>
            <person name="Roe B.A."/>
        </authorList>
    </citation>
    <scope>NUCLEOTIDE SEQUENCE [LARGE SCALE GENOMIC DNA]</scope>
    <source>
        <strain>cv. Jemalong A17</strain>
    </source>
</reference>
<reference key="2">
    <citation type="journal article" date="2014" name="BMC Genomics">
        <title>An improved genome release (version Mt4.0) for the model legume Medicago truncatula.</title>
        <authorList>
            <person name="Tang H."/>
            <person name="Krishnakumar V."/>
            <person name="Bidwell S."/>
            <person name="Rosen B."/>
            <person name="Chan A."/>
            <person name="Zhou S."/>
            <person name="Gentzbittel L."/>
            <person name="Childs K.L."/>
            <person name="Yandell M."/>
            <person name="Gundlach H."/>
            <person name="Mayer K.F."/>
            <person name="Schwartz D.C."/>
            <person name="Town C.D."/>
        </authorList>
    </citation>
    <scope>GENOME REANNOTATION</scope>
    <source>
        <strain>cv. Jemalong A17</strain>
    </source>
</reference>
<reference key="3">
    <citation type="journal article" date="2018" name="Nat. Plants">
        <title>Whole-genome landscape of Medicago truncatula symbiotic genes.</title>
        <authorList>
            <person name="Pecrix Y."/>
            <person name="Staton S.E."/>
            <person name="Sallet E."/>
            <person name="Lelandais-Briere C."/>
            <person name="Moreau S."/>
            <person name="Carrere S."/>
            <person name="Blein T."/>
            <person name="Jardinaud M.F."/>
            <person name="Latrasse D."/>
            <person name="Zouine M."/>
            <person name="Zahm M."/>
            <person name="Kreplak J."/>
            <person name="Mayjonade B."/>
            <person name="Satge C."/>
            <person name="Perez M."/>
            <person name="Cauet S."/>
            <person name="Marande W."/>
            <person name="Chantry-Darmon C."/>
            <person name="Lopez-Roques C."/>
            <person name="Bouchez O."/>
            <person name="Berard A."/>
            <person name="Debelle F."/>
            <person name="Munos S."/>
            <person name="Bendahmane A."/>
            <person name="Berges H."/>
            <person name="Niebel A."/>
            <person name="Buitink J."/>
            <person name="Frugier F."/>
            <person name="Benhamed M."/>
            <person name="Crespi M."/>
            <person name="Gouzy J."/>
            <person name="Gamas P."/>
        </authorList>
    </citation>
    <scope>NUCLEOTIDE SEQUENCE [LARGE SCALE GENOMIC DNA]</scope>
    <source>
        <strain>cv. Jemalong A17</strain>
    </source>
</reference>
<reference key="4">
    <citation type="submission" date="2008-12" db="EMBL/GenBank/DDBJ databases">
        <title>Medicago truncatula full length cdna cloning project.</title>
        <authorList>
            <person name="Moskal W."/>
            <person name="Chan A."/>
            <person name="Cheung F."/>
            <person name="Xiao Y."/>
            <person name="Town C.D."/>
        </authorList>
    </citation>
    <scope>NUCLEOTIDE SEQUENCE [LARGE SCALE MRNA]</scope>
</reference>
<reference key="5">
    <citation type="submission" date="2012-05" db="EMBL/GenBank/DDBJ databases">
        <authorList>
            <person name="Krishnakumar V."/>
            <person name="Cheung F."/>
            <person name="Xiao Y."/>
            <person name="Chan A."/>
            <person name="Moskal W.A."/>
            <person name="Town C.D."/>
        </authorList>
    </citation>
    <scope>NUCLEOTIDE SEQUENCE [LARGE SCALE MRNA]</scope>
</reference>
<reference key="6">
    <citation type="journal article" date="2014" name="Plant Cell">
        <title>Structural studies of cinnamoyl-CoA reductase and cinnamyl-alcohol dehydrogenase, key enzymes of monolignol biosynthesis.</title>
        <authorList>
            <person name="Pan H."/>
            <person name="Zhou R."/>
            <person name="Louie G.V."/>
            <person name="Muhlemann J.K."/>
            <person name="Bomati E.K."/>
            <person name="Bowman M.E."/>
            <person name="Dudareva N."/>
            <person name="Dixon R.A."/>
            <person name="Noel J.P."/>
            <person name="Wang X."/>
        </authorList>
    </citation>
    <scope>FUNCTION</scope>
    <scope>CATALYTIC ACTIVITY</scope>
    <scope>BIOPHYSICOCHEMICAL PROPERTIES</scope>
</reference>
<evidence type="ECO:0000250" key="1">
    <source>
        <dbReference type="UniProtKB" id="O49482"/>
    </source>
</evidence>
<evidence type="ECO:0000250" key="2">
    <source>
        <dbReference type="UniProtKB" id="Q9SJ25"/>
    </source>
</evidence>
<evidence type="ECO:0000255" key="3"/>
<evidence type="ECO:0000269" key="4">
    <source>
    </source>
</evidence>
<evidence type="ECO:0000303" key="5">
    <source>
    </source>
</evidence>
<evidence type="ECO:0000305" key="6"/>
<evidence type="ECO:0000305" key="7">
    <source>
    </source>
</evidence>
<evidence type="ECO:0000312" key="8">
    <source>
        <dbReference type="EMBL" id="KEH44099.1"/>
    </source>
</evidence>
<evidence type="ECO:0000312" key="9">
    <source>
        <dbReference type="EMBL" id="RHN82261.1"/>
    </source>
</evidence>
<organism>
    <name type="scientific">Medicago truncatula</name>
    <name type="common">Barrel medic</name>
    <name type="synonym">Medicago tribuloides</name>
    <dbReference type="NCBI Taxonomy" id="3880"/>
    <lineage>
        <taxon>Eukaryota</taxon>
        <taxon>Viridiplantae</taxon>
        <taxon>Streptophyta</taxon>
        <taxon>Embryophyta</taxon>
        <taxon>Tracheophyta</taxon>
        <taxon>Spermatophyta</taxon>
        <taxon>Magnoliopsida</taxon>
        <taxon>eudicotyledons</taxon>
        <taxon>Gunneridae</taxon>
        <taxon>Pentapetalae</taxon>
        <taxon>rosids</taxon>
        <taxon>fabids</taxon>
        <taxon>Fabales</taxon>
        <taxon>Fabaceae</taxon>
        <taxon>Papilionoideae</taxon>
        <taxon>50 kb inversion clade</taxon>
        <taxon>NPAAA clade</taxon>
        <taxon>Hologalegina</taxon>
        <taxon>IRL clade</taxon>
        <taxon>Trifolieae</taxon>
        <taxon>Medicago</taxon>
    </lineage>
</organism>